<organism>
    <name type="scientific">Shigella dysenteriae serotype 1 (strain Sd197)</name>
    <dbReference type="NCBI Taxonomy" id="300267"/>
    <lineage>
        <taxon>Bacteria</taxon>
        <taxon>Pseudomonadati</taxon>
        <taxon>Pseudomonadota</taxon>
        <taxon>Gammaproteobacteria</taxon>
        <taxon>Enterobacterales</taxon>
        <taxon>Enterobacteriaceae</taxon>
        <taxon>Shigella</taxon>
    </lineage>
</organism>
<comment type="function">
    <text evidence="1">Binds to DNA and alters its conformation. May be involved in regulation of gene expression, nucleoid organization and DNA protection.</text>
</comment>
<comment type="subunit">
    <text evidence="1">Homodimer.</text>
</comment>
<comment type="subcellular location">
    <subcellularLocation>
        <location evidence="1">Cytoplasm</location>
        <location evidence="1">Nucleoid</location>
    </subcellularLocation>
</comment>
<comment type="similarity">
    <text evidence="1">Belongs to the YbaB/EbfC family.</text>
</comment>
<gene>
    <name evidence="1" type="primary">ybaB</name>
    <name type="ordered locus">SDY_0448</name>
</gene>
<dbReference type="EMBL" id="CP000034">
    <property type="protein sequence ID" value="ABB60656.1"/>
    <property type="molecule type" value="Genomic_DNA"/>
</dbReference>
<dbReference type="RefSeq" id="WP_000467098.1">
    <property type="nucleotide sequence ID" value="NC_007606.1"/>
</dbReference>
<dbReference type="RefSeq" id="YP_402145.1">
    <property type="nucleotide sequence ID" value="NC_007606.1"/>
</dbReference>
<dbReference type="SMR" id="Q32J51"/>
<dbReference type="STRING" id="300267.SDY_0448"/>
<dbReference type="EnsemblBacteria" id="ABB60656">
    <property type="protein sequence ID" value="ABB60656"/>
    <property type="gene ID" value="SDY_0448"/>
</dbReference>
<dbReference type="KEGG" id="sdy:SDY_0448"/>
<dbReference type="PATRIC" id="fig|300267.13.peg.531"/>
<dbReference type="HOGENOM" id="CLU_140930_0_0_6"/>
<dbReference type="Proteomes" id="UP000002716">
    <property type="component" value="Chromosome"/>
</dbReference>
<dbReference type="GO" id="GO:0043590">
    <property type="term" value="C:bacterial nucleoid"/>
    <property type="evidence" value="ECO:0007669"/>
    <property type="project" value="UniProtKB-UniRule"/>
</dbReference>
<dbReference type="GO" id="GO:0005829">
    <property type="term" value="C:cytosol"/>
    <property type="evidence" value="ECO:0007669"/>
    <property type="project" value="TreeGrafter"/>
</dbReference>
<dbReference type="GO" id="GO:0003677">
    <property type="term" value="F:DNA binding"/>
    <property type="evidence" value="ECO:0007669"/>
    <property type="project" value="UniProtKB-UniRule"/>
</dbReference>
<dbReference type="FunFam" id="3.30.1310.10:FF:000001">
    <property type="entry name" value="Nucleoid-associated protein YbaB"/>
    <property type="match status" value="1"/>
</dbReference>
<dbReference type="Gene3D" id="3.30.1310.10">
    <property type="entry name" value="Nucleoid-associated protein YbaB-like domain"/>
    <property type="match status" value="1"/>
</dbReference>
<dbReference type="HAMAP" id="MF_00274">
    <property type="entry name" value="DNA_YbaB_EbfC"/>
    <property type="match status" value="1"/>
</dbReference>
<dbReference type="InterPro" id="IPR036894">
    <property type="entry name" value="YbaB-like_sf"/>
</dbReference>
<dbReference type="InterPro" id="IPR004401">
    <property type="entry name" value="YbaB/EbfC"/>
</dbReference>
<dbReference type="NCBIfam" id="TIGR00103">
    <property type="entry name" value="DNA_YbaB_EbfC"/>
    <property type="match status" value="1"/>
</dbReference>
<dbReference type="PANTHER" id="PTHR33449">
    <property type="entry name" value="NUCLEOID-ASSOCIATED PROTEIN YBAB"/>
    <property type="match status" value="1"/>
</dbReference>
<dbReference type="PANTHER" id="PTHR33449:SF1">
    <property type="entry name" value="NUCLEOID-ASSOCIATED PROTEIN YBAB"/>
    <property type="match status" value="1"/>
</dbReference>
<dbReference type="Pfam" id="PF02575">
    <property type="entry name" value="YbaB_DNA_bd"/>
    <property type="match status" value="1"/>
</dbReference>
<dbReference type="PIRSF" id="PIRSF004555">
    <property type="entry name" value="UCP004555"/>
    <property type="match status" value="1"/>
</dbReference>
<dbReference type="SUPFAM" id="SSF82607">
    <property type="entry name" value="YbaB-like"/>
    <property type="match status" value="1"/>
</dbReference>
<feature type="chain" id="PRO_1000003826" description="Nucleoid-associated protein YbaB">
    <location>
        <begin position="1"/>
        <end position="109"/>
    </location>
</feature>
<accession>Q32J51</accession>
<proteinExistence type="inferred from homology"/>
<keyword id="KW-0963">Cytoplasm</keyword>
<keyword id="KW-0238">DNA-binding</keyword>
<keyword id="KW-1185">Reference proteome</keyword>
<sequence length="109" mass="12015">MFGKGGLGNLMKQAQQMQEKMQKMQEEIAQLEVTGESGAGLVKVTINGAHNCRRVEIDPSLLEDDKEMLEDLVAAAFNDAARRIEETQKEKMASVSSGMQLPPGFKMPF</sequence>
<name>YBAB_SHIDS</name>
<evidence type="ECO:0000255" key="1">
    <source>
        <dbReference type="HAMAP-Rule" id="MF_00274"/>
    </source>
</evidence>
<reference key="1">
    <citation type="journal article" date="2005" name="Nucleic Acids Res.">
        <title>Genome dynamics and diversity of Shigella species, the etiologic agents of bacillary dysentery.</title>
        <authorList>
            <person name="Yang F."/>
            <person name="Yang J."/>
            <person name="Zhang X."/>
            <person name="Chen L."/>
            <person name="Jiang Y."/>
            <person name="Yan Y."/>
            <person name="Tang X."/>
            <person name="Wang J."/>
            <person name="Xiong Z."/>
            <person name="Dong J."/>
            <person name="Xue Y."/>
            <person name="Zhu Y."/>
            <person name="Xu X."/>
            <person name="Sun L."/>
            <person name="Chen S."/>
            <person name="Nie H."/>
            <person name="Peng J."/>
            <person name="Xu J."/>
            <person name="Wang Y."/>
            <person name="Yuan Z."/>
            <person name="Wen Y."/>
            <person name="Yao Z."/>
            <person name="Shen Y."/>
            <person name="Qiang B."/>
            <person name="Hou Y."/>
            <person name="Yu J."/>
            <person name="Jin Q."/>
        </authorList>
    </citation>
    <scope>NUCLEOTIDE SEQUENCE [LARGE SCALE GENOMIC DNA]</scope>
    <source>
        <strain>Sd197</strain>
    </source>
</reference>
<protein>
    <recommendedName>
        <fullName evidence="1">Nucleoid-associated protein YbaB</fullName>
    </recommendedName>
</protein>